<accession>Q9WVM6</accession>
<accession>A2RTK3</accession>
<protein>
    <recommendedName>
        <fullName>Tolloid-like protein 2</fullName>
        <ecNumber>3.4.24.-</ecNumber>
    </recommendedName>
</protein>
<gene>
    <name type="primary">Tll2</name>
</gene>
<reference key="1">
    <citation type="journal article" date="1999" name="Dev. Biol.">
        <title>Mammalian BMP-1/Tolloid-related metalloproteinases, including novel family member mammalian Tolloid-like 2, have differential enzymatic activities and distributions of expression relevant to patterning and skeletogenesis.</title>
        <authorList>
            <person name="Scott I.C."/>
            <person name="Blitz I.L."/>
            <person name="Pappano W.N."/>
            <person name="Imamura Y."/>
            <person name="Clark T.G."/>
            <person name="Steiglitz B.M."/>
            <person name="Thomas C.L."/>
            <person name="Maas S.A."/>
            <person name="Takahara K."/>
            <person name="Cho K.W."/>
            <person name="Greenspan D.S."/>
        </authorList>
    </citation>
    <scope>NUCLEOTIDE SEQUENCE [MRNA]</scope>
    <scope>DEVELOPMENTAL STAGE</scope>
</reference>
<reference key="2">
    <citation type="journal article" date="2004" name="Genome Res.">
        <title>The status, quality, and expansion of the NIH full-length cDNA project: the Mammalian Gene Collection (MGC).</title>
        <authorList>
            <consortium name="The MGC Project Team"/>
        </authorList>
    </citation>
    <scope>NUCLEOTIDE SEQUENCE [LARGE SCALE MRNA]</scope>
    <source>
        <tissue>Brain</tissue>
    </source>
</reference>
<reference key="3">
    <citation type="journal article" date="2001" name="J. Biol. Chem.">
        <title>Multiple bone morphogenetic protein 1-related mammalian metalloproteinases process pro-lysyl oxidase at the correct physiological site and control lysyl oxidase activation in mouse embryo fibroblast cultures.</title>
        <authorList>
            <person name="Uzel M.I."/>
            <person name="Scott I.C."/>
            <person name="Babakhanlou-Chase H."/>
            <person name="Palamakumbura A.H."/>
            <person name="Pappano W.N."/>
            <person name="Hong H.-H."/>
            <person name="Greenspan D.S."/>
            <person name="Trackman P.C."/>
        </authorList>
    </citation>
    <scope>CHARACTERIZATION</scope>
</reference>
<reference key="4">
    <citation type="journal article" date="2014" name="Mol. Cell. Proteomics">
        <title>Immunoaffinity enrichment and mass spectrometry analysis of protein methylation.</title>
        <authorList>
            <person name="Guo A."/>
            <person name="Gu H."/>
            <person name="Zhou J."/>
            <person name="Mulhern D."/>
            <person name="Wang Y."/>
            <person name="Lee K.A."/>
            <person name="Yang V."/>
            <person name="Aguiar M."/>
            <person name="Kornhauser J."/>
            <person name="Jia X."/>
            <person name="Ren J."/>
            <person name="Beausoleil S.A."/>
            <person name="Silva J.C."/>
            <person name="Vemulapalli V."/>
            <person name="Bedford M.T."/>
            <person name="Comb M.J."/>
        </authorList>
    </citation>
    <scope>METHYLATION [LARGE SCALE ANALYSIS] AT ARG-960 AND ARG-963</scope>
    <scope>IDENTIFICATION BY MASS SPECTROMETRY [LARGE SCALE ANALYSIS]</scope>
    <source>
        <tissue>Embryo</tissue>
    </source>
</reference>
<proteinExistence type="evidence at protein level"/>
<comment type="function">
    <text>Protease which specifically processes pro-lysyl oxidase. Required for the embryonic development. Predominant protease, which in the development, influences dorsal-ventral patterning and skeletogenesis.</text>
</comment>
<comment type="cofactor">
    <cofactor evidence="5">
        <name>Zn(2+)</name>
        <dbReference type="ChEBI" id="CHEBI:29105"/>
    </cofactor>
    <text evidence="5">Binds 1 zinc ion per subunit.</text>
</comment>
<comment type="subcellular location">
    <subcellularLocation>
        <location evidence="8">Secreted</location>
    </subcellularLocation>
</comment>
<comment type="developmental stage">
    <text evidence="7">Expressed at 7.5 dpc, in a limited way, in the posterior portion of the egg cylinder in the nascent mesoderm streaming off the primitive streak. At the distant end of the embryo cylinder, expression ended at the node. Later in the development, expression seems to be limited to developing skeletal muscle and central nervous system.</text>
</comment>
<feature type="signal peptide" evidence="2">
    <location>
        <begin position="1"/>
        <end position="21"/>
    </location>
</feature>
<feature type="propeptide" id="PRO_0000046038" evidence="1">
    <location>
        <begin position="22"/>
        <end position="146"/>
    </location>
</feature>
<feature type="chain" id="PRO_0000046039" description="Tolloid-like protein 2">
    <location>
        <begin position="147"/>
        <end position="1012"/>
    </location>
</feature>
<feature type="domain" description="Peptidase M12A" evidence="5">
    <location>
        <begin position="146"/>
        <end position="346"/>
    </location>
</feature>
<feature type="domain" description="CUB 1" evidence="3">
    <location>
        <begin position="348"/>
        <end position="460"/>
    </location>
</feature>
<feature type="domain" description="CUB 2" evidence="3">
    <location>
        <begin position="461"/>
        <end position="573"/>
    </location>
</feature>
<feature type="domain" description="EGF-like 1; calcium-binding" evidence="4">
    <location>
        <begin position="573"/>
        <end position="614"/>
    </location>
</feature>
<feature type="domain" description="CUB 3" evidence="3">
    <location>
        <begin position="617"/>
        <end position="729"/>
    </location>
</feature>
<feature type="domain" description="EGF-like 2; calcium-binding" evidence="4">
    <location>
        <begin position="729"/>
        <end position="769"/>
    </location>
</feature>
<feature type="domain" description="CUB 4" evidence="3">
    <location>
        <begin position="773"/>
        <end position="885"/>
    </location>
</feature>
<feature type="domain" description="CUB 5" evidence="3">
    <location>
        <begin position="886"/>
        <end position="1002"/>
    </location>
</feature>
<feature type="region of interest" description="Disordered" evidence="6">
    <location>
        <begin position="83"/>
        <end position="135"/>
    </location>
</feature>
<feature type="compositionally biased region" description="Polar residues" evidence="6">
    <location>
        <begin position="126"/>
        <end position="135"/>
    </location>
</feature>
<feature type="active site" evidence="5">
    <location>
        <position position="240"/>
    </location>
</feature>
<feature type="binding site" evidence="5">
    <location>
        <position position="239"/>
    </location>
    <ligand>
        <name>Zn(2+)</name>
        <dbReference type="ChEBI" id="CHEBI:29105"/>
        <note>catalytic</note>
    </ligand>
</feature>
<feature type="binding site" evidence="5">
    <location>
        <position position="243"/>
    </location>
    <ligand>
        <name>Zn(2+)</name>
        <dbReference type="ChEBI" id="CHEBI:29105"/>
        <note>catalytic</note>
    </ligand>
</feature>
<feature type="binding site" evidence="5">
    <location>
        <position position="249"/>
    </location>
    <ligand>
        <name>Zn(2+)</name>
        <dbReference type="ChEBI" id="CHEBI:29105"/>
        <note>catalytic</note>
    </ligand>
</feature>
<feature type="modified residue" description="Omega-N-methylarginine" evidence="9">
    <location>
        <position position="960"/>
    </location>
</feature>
<feature type="modified residue" description="Omega-N-methylarginine" evidence="9">
    <location>
        <position position="963"/>
    </location>
</feature>
<feature type="glycosylation site" description="N-linked (GlcNAc...) asparagine" evidence="2">
    <location>
        <position position="168"/>
    </location>
</feature>
<feature type="glycosylation site" description="N-linked (GlcNAc...) asparagine" evidence="2">
    <location>
        <position position="358"/>
    </location>
</feature>
<feature type="glycosylation site" description="N-linked (GlcNAc...) asparagine" evidence="2">
    <location>
        <position position="389"/>
    </location>
</feature>
<feature type="glycosylation site" description="N-linked (GlcNAc...) asparagine" evidence="2">
    <location>
        <position position="625"/>
    </location>
</feature>
<feature type="glycosylation site" description="N-linked (GlcNAc...) asparagine" evidence="2">
    <location>
        <position position="802"/>
    </location>
</feature>
<feature type="disulfide bond" evidence="5">
    <location>
        <begin position="189"/>
        <end position="345"/>
    </location>
</feature>
<feature type="disulfide bond" evidence="5">
    <location>
        <begin position="209"/>
        <end position="231"/>
    </location>
</feature>
<feature type="disulfide bond" evidence="5">
    <location>
        <begin position="211"/>
        <end position="212"/>
    </location>
</feature>
<feature type="disulfide bond" evidence="1">
    <location>
        <begin position="348"/>
        <end position="374"/>
    </location>
</feature>
<feature type="disulfide bond" evidence="1">
    <location>
        <begin position="401"/>
        <end position="423"/>
    </location>
</feature>
<feature type="disulfide bond" evidence="1">
    <location>
        <begin position="461"/>
        <end position="487"/>
    </location>
</feature>
<feature type="disulfide bond" evidence="1">
    <location>
        <begin position="514"/>
        <end position="536"/>
    </location>
</feature>
<feature type="disulfide bond" evidence="1">
    <location>
        <begin position="577"/>
        <end position="589"/>
    </location>
</feature>
<feature type="disulfide bond" evidence="1">
    <location>
        <begin position="585"/>
        <end position="598"/>
    </location>
</feature>
<feature type="disulfide bond" evidence="1">
    <location>
        <begin position="600"/>
        <end position="613"/>
    </location>
</feature>
<feature type="disulfide bond" evidence="1">
    <location>
        <begin position="617"/>
        <end position="643"/>
    </location>
</feature>
<feature type="disulfide bond" evidence="1">
    <location>
        <begin position="670"/>
        <end position="692"/>
    </location>
</feature>
<feature type="disulfide bond" evidence="1">
    <location>
        <begin position="733"/>
        <end position="744"/>
    </location>
</feature>
<feature type="disulfide bond" evidence="1">
    <location>
        <begin position="740"/>
        <end position="753"/>
    </location>
</feature>
<feature type="disulfide bond" evidence="1">
    <location>
        <begin position="755"/>
        <end position="768"/>
    </location>
</feature>
<feature type="disulfide bond" evidence="1">
    <location>
        <begin position="773"/>
        <end position="799"/>
    </location>
</feature>
<feature type="disulfide bond" evidence="1">
    <location>
        <begin position="826"/>
        <end position="848"/>
    </location>
</feature>
<feature type="disulfide bond" evidence="1">
    <location>
        <begin position="886"/>
        <end position="916"/>
    </location>
</feature>
<feature type="disulfide bond" evidence="1">
    <location>
        <begin position="943"/>
        <end position="965"/>
    </location>
</feature>
<sequence>MPLATTLGTLVLLLLLPLPRGAEVTGDHSNVALDYGALEGEEGTEQQLHYHDPCKAAVFWGDIALDEDDLKLFHIDKAEDWTKPSIDKPGHDTGGLEETSARWPNDTASNASIQAPRKDGKDATTFLPNPGTSNTTAKTFSARVRRATTSRTERIWPGGVIPYVIGGNFTGTQRAIFKQAMRHWEKHTCVTFVERTDEESFIVFSYRTCGCCSYVGRRGGGPQAISIGKNCDKFGIVAHELGHVVGFWHEHTRPDRDQHVTIIRENIQPGQEYNFLKMEAGEVSSLGETYDFDSIMHYARNTFSRGVFLDTILPRRDDNGVRPTIGQRVRLSQGDIAQARKLYKCPACGETLQDTTGNFSAPGFPNGYPSYSHCVWRISVTPGEKIILNFTSMDLFKSRLCWYDYVEIRDGYWRKAPLLGRFCGDKIPESLVSSDSRLWVEFRSSSSSLGKGFFAVYEAMCGGDITKDAGQIQSPNYPDDYRPSKECVWRITVPDGFHVGLTFQSFEIERHDSCAYDYLEIRDGPTEDSTLIGHFCGYEKPEAVKSSANRLWVKFVSDGSINKAGFAANFFKEVDECSWPDHGGCEQRCVNTLGSYTCACDPGYELAADKKTCEVACGGFITKLNGTITSPGWPKEYPTNKNCVWQVVAPVQYRISLQFEAFELEGNDVCKYDFVEVRSGLSPDAKLHGKFCGSETPEVITSQSNNMRVEFKSDNTVSKRGFRAHFFSDKDECAKDNGGCQQECVNTFGSYLCRCRNGYRLHENGHDCKEAGCAYKISSAEGTLMSPNWPDKYPSRKECTWNISSTAGHRVKITFSEFEIEQHQECAYDHLELYDGTDSLAPILGRFCGSKKPDPVVATGSSLFLRFYSDASVQRKGFQAVHSTECGGRLKAEVQTKELYSHAQFGDNNYPSQARCDWVIVAEDGYGVELIFRTFEVEEEADCGYDFMEAYDGYDSSAPRLGRFCGSGPLEEIYSAGDSLMIRFHTDDTINKKGFHARYTSTKFQDALHMRK</sequence>
<keyword id="KW-0106">Calcium</keyword>
<keyword id="KW-0165">Cleavage on pair of basic residues</keyword>
<keyword id="KW-0217">Developmental protein</keyword>
<keyword id="KW-0221">Differentiation</keyword>
<keyword id="KW-1015">Disulfide bond</keyword>
<keyword id="KW-0245">EGF-like domain</keyword>
<keyword id="KW-0325">Glycoprotein</keyword>
<keyword id="KW-0378">Hydrolase</keyword>
<keyword id="KW-0479">Metal-binding</keyword>
<keyword id="KW-0482">Metalloprotease</keyword>
<keyword id="KW-0488">Methylation</keyword>
<keyword id="KW-0645">Protease</keyword>
<keyword id="KW-1185">Reference proteome</keyword>
<keyword id="KW-0677">Repeat</keyword>
<keyword id="KW-0964">Secreted</keyword>
<keyword id="KW-0732">Signal</keyword>
<keyword id="KW-0862">Zinc</keyword>
<keyword id="KW-0865">Zymogen</keyword>
<organism>
    <name type="scientific">Mus musculus</name>
    <name type="common">Mouse</name>
    <dbReference type="NCBI Taxonomy" id="10090"/>
    <lineage>
        <taxon>Eukaryota</taxon>
        <taxon>Metazoa</taxon>
        <taxon>Chordata</taxon>
        <taxon>Craniata</taxon>
        <taxon>Vertebrata</taxon>
        <taxon>Euteleostomi</taxon>
        <taxon>Mammalia</taxon>
        <taxon>Eutheria</taxon>
        <taxon>Euarchontoglires</taxon>
        <taxon>Glires</taxon>
        <taxon>Rodentia</taxon>
        <taxon>Myomorpha</taxon>
        <taxon>Muroidea</taxon>
        <taxon>Muridae</taxon>
        <taxon>Murinae</taxon>
        <taxon>Mus</taxon>
        <taxon>Mus</taxon>
    </lineage>
</organism>
<evidence type="ECO:0000250" key="1"/>
<evidence type="ECO:0000255" key="2"/>
<evidence type="ECO:0000255" key="3">
    <source>
        <dbReference type="PROSITE-ProRule" id="PRU00059"/>
    </source>
</evidence>
<evidence type="ECO:0000255" key="4">
    <source>
        <dbReference type="PROSITE-ProRule" id="PRU00076"/>
    </source>
</evidence>
<evidence type="ECO:0000255" key="5">
    <source>
        <dbReference type="PROSITE-ProRule" id="PRU01211"/>
    </source>
</evidence>
<evidence type="ECO:0000256" key="6">
    <source>
        <dbReference type="SAM" id="MobiDB-lite"/>
    </source>
</evidence>
<evidence type="ECO:0000269" key="7">
    <source>
    </source>
</evidence>
<evidence type="ECO:0000305" key="8"/>
<evidence type="ECO:0007744" key="9">
    <source>
    </source>
</evidence>
<name>TLL2_MOUSE</name>
<dbReference type="EC" id="3.4.24.-"/>
<dbReference type="EMBL" id="AF073526">
    <property type="protein sequence ID" value="AAD42993.1"/>
    <property type="molecule type" value="mRNA"/>
</dbReference>
<dbReference type="EMBL" id="BC132537">
    <property type="protein sequence ID" value="AAI32538.1"/>
    <property type="molecule type" value="mRNA"/>
</dbReference>
<dbReference type="CCDS" id="CCDS37986.1"/>
<dbReference type="RefSeq" id="NP_036034.1">
    <property type="nucleotide sequence ID" value="NM_011904.4"/>
</dbReference>
<dbReference type="SMR" id="Q9WVM6"/>
<dbReference type="FunCoup" id="Q9WVM6">
    <property type="interactions" value="183"/>
</dbReference>
<dbReference type="STRING" id="10090.ENSMUSP00000025986"/>
<dbReference type="MEROPS" id="M12.018"/>
<dbReference type="GlyCosmos" id="Q9WVM6">
    <property type="glycosylation" value="5 sites, No reported glycans"/>
</dbReference>
<dbReference type="GlyGen" id="Q9WVM6">
    <property type="glycosylation" value="8 sites, 2 N-linked glycans (2 sites)"/>
</dbReference>
<dbReference type="iPTMnet" id="Q9WVM6"/>
<dbReference type="PhosphoSitePlus" id="Q9WVM6"/>
<dbReference type="PaxDb" id="10090-ENSMUSP00000025986"/>
<dbReference type="ProteomicsDB" id="259204"/>
<dbReference type="Antibodypedia" id="53639">
    <property type="antibodies" value="48 antibodies from 18 providers"/>
</dbReference>
<dbReference type="DNASU" id="24087"/>
<dbReference type="Ensembl" id="ENSMUST00000025986.15">
    <property type="protein sequence ID" value="ENSMUSP00000025986.8"/>
    <property type="gene ID" value="ENSMUSG00000025013.16"/>
</dbReference>
<dbReference type="GeneID" id="24087"/>
<dbReference type="KEGG" id="mmu:24087"/>
<dbReference type="UCSC" id="uc008hlr.1">
    <property type="organism name" value="mouse"/>
</dbReference>
<dbReference type="AGR" id="MGI:1346044"/>
<dbReference type="CTD" id="7093"/>
<dbReference type="MGI" id="MGI:1346044">
    <property type="gene designation" value="Tll2"/>
</dbReference>
<dbReference type="VEuPathDB" id="HostDB:ENSMUSG00000025013"/>
<dbReference type="eggNOG" id="KOG3714">
    <property type="taxonomic scope" value="Eukaryota"/>
</dbReference>
<dbReference type="GeneTree" id="ENSGT00940000160572"/>
<dbReference type="HOGENOM" id="CLU_005140_0_0_1"/>
<dbReference type="InParanoid" id="Q9WVM6"/>
<dbReference type="OMA" id="WTKQTVG"/>
<dbReference type="OrthoDB" id="431034at2759"/>
<dbReference type="PhylomeDB" id="Q9WVM6"/>
<dbReference type="TreeFam" id="TF314351"/>
<dbReference type="Reactome" id="R-MMU-1650814">
    <property type="pathway name" value="Collagen biosynthesis and modifying enzymes"/>
</dbReference>
<dbReference type="Reactome" id="R-MMU-2214320">
    <property type="pathway name" value="Anchoring fibril formation"/>
</dbReference>
<dbReference type="Reactome" id="R-MMU-2243919">
    <property type="pathway name" value="Crosslinking of collagen fibrils"/>
</dbReference>
<dbReference type="BioGRID-ORCS" id="24087">
    <property type="hits" value="4 hits in 81 CRISPR screens"/>
</dbReference>
<dbReference type="ChiTaRS" id="Tll2">
    <property type="organism name" value="mouse"/>
</dbReference>
<dbReference type="PRO" id="PR:Q9WVM6"/>
<dbReference type="Proteomes" id="UP000000589">
    <property type="component" value="Chromosome 19"/>
</dbReference>
<dbReference type="RNAct" id="Q9WVM6">
    <property type="molecule type" value="protein"/>
</dbReference>
<dbReference type="Bgee" id="ENSMUSG00000025013">
    <property type="expression patterns" value="Expressed in cortical plate and 9 other cell types or tissues"/>
</dbReference>
<dbReference type="ExpressionAtlas" id="Q9WVM6">
    <property type="expression patterns" value="baseline and differential"/>
</dbReference>
<dbReference type="GO" id="GO:0005576">
    <property type="term" value="C:extracellular region"/>
    <property type="evidence" value="ECO:0007669"/>
    <property type="project" value="UniProtKB-SubCell"/>
</dbReference>
<dbReference type="GO" id="GO:0005509">
    <property type="term" value="F:calcium ion binding"/>
    <property type="evidence" value="ECO:0007669"/>
    <property type="project" value="InterPro"/>
</dbReference>
<dbReference type="GO" id="GO:0004222">
    <property type="term" value="F:metalloendopeptidase activity"/>
    <property type="evidence" value="ECO:0007669"/>
    <property type="project" value="InterPro"/>
</dbReference>
<dbReference type="GO" id="GO:0008270">
    <property type="term" value="F:zinc ion binding"/>
    <property type="evidence" value="ECO:0007669"/>
    <property type="project" value="InterPro"/>
</dbReference>
<dbReference type="GO" id="GO:0030154">
    <property type="term" value="P:cell differentiation"/>
    <property type="evidence" value="ECO:0007669"/>
    <property type="project" value="UniProtKB-KW"/>
</dbReference>
<dbReference type="GO" id="GO:0048632">
    <property type="term" value="P:negative regulation of skeletal muscle tissue growth"/>
    <property type="evidence" value="ECO:0000315"/>
    <property type="project" value="MGI"/>
</dbReference>
<dbReference type="GO" id="GO:0006508">
    <property type="term" value="P:proteolysis"/>
    <property type="evidence" value="ECO:0007669"/>
    <property type="project" value="UniProtKB-KW"/>
</dbReference>
<dbReference type="CDD" id="cd00041">
    <property type="entry name" value="CUB"/>
    <property type="match status" value="5"/>
</dbReference>
<dbReference type="CDD" id="cd00054">
    <property type="entry name" value="EGF_CA"/>
    <property type="match status" value="1"/>
</dbReference>
<dbReference type="CDD" id="cd04281">
    <property type="entry name" value="ZnMc_BMP1_TLD"/>
    <property type="match status" value="1"/>
</dbReference>
<dbReference type="FunFam" id="2.10.25.10:FF:000022">
    <property type="entry name" value="Metalloendopeptidase"/>
    <property type="match status" value="2"/>
</dbReference>
<dbReference type="FunFam" id="2.60.120.290:FF:000004">
    <property type="entry name" value="Metalloendopeptidase"/>
    <property type="match status" value="1"/>
</dbReference>
<dbReference type="FunFam" id="2.60.120.290:FF:000007">
    <property type="entry name" value="Metalloendopeptidase"/>
    <property type="match status" value="1"/>
</dbReference>
<dbReference type="FunFam" id="2.60.120.290:FF:000009">
    <property type="entry name" value="Metalloendopeptidase"/>
    <property type="match status" value="1"/>
</dbReference>
<dbReference type="FunFam" id="2.60.120.290:FF:000011">
    <property type="entry name" value="Metalloendopeptidase"/>
    <property type="match status" value="1"/>
</dbReference>
<dbReference type="FunFam" id="2.60.120.290:FF:000014">
    <property type="entry name" value="Metalloendopeptidase"/>
    <property type="match status" value="1"/>
</dbReference>
<dbReference type="FunFam" id="3.40.390.10:FF:000004">
    <property type="entry name" value="Metalloendopeptidase"/>
    <property type="match status" value="1"/>
</dbReference>
<dbReference type="Gene3D" id="3.40.390.10">
    <property type="entry name" value="Collagenase (Catalytic Domain)"/>
    <property type="match status" value="1"/>
</dbReference>
<dbReference type="Gene3D" id="2.10.25.10">
    <property type="entry name" value="Laminin"/>
    <property type="match status" value="2"/>
</dbReference>
<dbReference type="Gene3D" id="2.60.120.290">
    <property type="entry name" value="Spermadhesin, CUB domain"/>
    <property type="match status" value="5"/>
</dbReference>
<dbReference type="InterPro" id="IPR015446">
    <property type="entry name" value="BMP_1/tolloid-like"/>
</dbReference>
<dbReference type="InterPro" id="IPR000859">
    <property type="entry name" value="CUB_dom"/>
</dbReference>
<dbReference type="InterPro" id="IPR001881">
    <property type="entry name" value="EGF-like_Ca-bd_dom"/>
</dbReference>
<dbReference type="InterPro" id="IPR000742">
    <property type="entry name" value="EGF-like_dom"/>
</dbReference>
<dbReference type="InterPro" id="IPR000152">
    <property type="entry name" value="EGF-type_Asp/Asn_hydroxyl_site"/>
</dbReference>
<dbReference type="InterPro" id="IPR018097">
    <property type="entry name" value="EGF_Ca-bd_CS"/>
</dbReference>
<dbReference type="InterPro" id="IPR024079">
    <property type="entry name" value="MetalloPept_cat_dom_sf"/>
</dbReference>
<dbReference type="InterPro" id="IPR049883">
    <property type="entry name" value="NOTCH1_EGF-like"/>
</dbReference>
<dbReference type="InterPro" id="IPR001506">
    <property type="entry name" value="Peptidase_M12A"/>
</dbReference>
<dbReference type="InterPro" id="IPR006026">
    <property type="entry name" value="Peptidase_Metallo"/>
</dbReference>
<dbReference type="InterPro" id="IPR035914">
    <property type="entry name" value="Sperma_CUB_dom_sf"/>
</dbReference>
<dbReference type="InterPro" id="IPR034036">
    <property type="entry name" value="ZnMP_TLD/BMP1"/>
</dbReference>
<dbReference type="PANTHER" id="PTHR24251:SF45">
    <property type="entry name" value="METALLOENDOPEPTIDASE"/>
    <property type="match status" value="1"/>
</dbReference>
<dbReference type="PANTHER" id="PTHR24251">
    <property type="entry name" value="OVOCHYMASE-RELATED"/>
    <property type="match status" value="1"/>
</dbReference>
<dbReference type="Pfam" id="PF01400">
    <property type="entry name" value="Astacin"/>
    <property type="match status" value="1"/>
</dbReference>
<dbReference type="Pfam" id="PF00431">
    <property type="entry name" value="CUB"/>
    <property type="match status" value="5"/>
</dbReference>
<dbReference type="Pfam" id="PF07645">
    <property type="entry name" value="EGF_CA"/>
    <property type="match status" value="1"/>
</dbReference>
<dbReference type="Pfam" id="PF14670">
    <property type="entry name" value="FXa_inhibition"/>
    <property type="match status" value="1"/>
</dbReference>
<dbReference type="PIRSF" id="PIRSF001199">
    <property type="entry name" value="BMP_1/tolloid-like"/>
    <property type="match status" value="1"/>
</dbReference>
<dbReference type="PRINTS" id="PR00480">
    <property type="entry name" value="ASTACIN"/>
</dbReference>
<dbReference type="SMART" id="SM00042">
    <property type="entry name" value="CUB"/>
    <property type="match status" value="5"/>
</dbReference>
<dbReference type="SMART" id="SM00181">
    <property type="entry name" value="EGF"/>
    <property type="match status" value="2"/>
</dbReference>
<dbReference type="SMART" id="SM00179">
    <property type="entry name" value="EGF_CA"/>
    <property type="match status" value="2"/>
</dbReference>
<dbReference type="SMART" id="SM00235">
    <property type="entry name" value="ZnMc"/>
    <property type="match status" value="1"/>
</dbReference>
<dbReference type="SUPFAM" id="SSF57196">
    <property type="entry name" value="EGF/Laminin"/>
    <property type="match status" value="2"/>
</dbReference>
<dbReference type="SUPFAM" id="SSF55486">
    <property type="entry name" value="Metalloproteases ('zincins'), catalytic domain"/>
    <property type="match status" value="1"/>
</dbReference>
<dbReference type="SUPFAM" id="SSF49854">
    <property type="entry name" value="Spermadhesin, CUB domain"/>
    <property type="match status" value="5"/>
</dbReference>
<dbReference type="PROSITE" id="PS51864">
    <property type="entry name" value="ASTACIN"/>
    <property type="match status" value="1"/>
</dbReference>
<dbReference type="PROSITE" id="PS01180">
    <property type="entry name" value="CUB"/>
    <property type="match status" value="5"/>
</dbReference>
<dbReference type="PROSITE" id="PS01186">
    <property type="entry name" value="EGF_2"/>
    <property type="match status" value="2"/>
</dbReference>
<dbReference type="PROSITE" id="PS50026">
    <property type="entry name" value="EGF_3"/>
    <property type="match status" value="2"/>
</dbReference>
<dbReference type="PROSITE" id="PS01187">
    <property type="entry name" value="EGF_CA"/>
    <property type="match status" value="2"/>
</dbReference>
<dbReference type="PROSITE" id="PS00142">
    <property type="entry name" value="ZINC_PROTEASE"/>
    <property type="match status" value="1"/>
</dbReference>